<reference key="1">
    <citation type="submission" date="2006-05" db="EMBL/GenBank/DDBJ databases">
        <title>Complete sequence of chromosome of Silicibacter sp. TM1040.</title>
        <authorList>
            <consortium name="US DOE Joint Genome Institute"/>
            <person name="Copeland A."/>
            <person name="Lucas S."/>
            <person name="Lapidus A."/>
            <person name="Barry K."/>
            <person name="Detter J.C."/>
            <person name="Glavina del Rio T."/>
            <person name="Hammon N."/>
            <person name="Israni S."/>
            <person name="Dalin E."/>
            <person name="Tice H."/>
            <person name="Pitluck S."/>
            <person name="Brettin T."/>
            <person name="Bruce D."/>
            <person name="Han C."/>
            <person name="Tapia R."/>
            <person name="Goodwin L."/>
            <person name="Thompson L.S."/>
            <person name="Gilna P."/>
            <person name="Schmutz J."/>
            <person name="Larimer F."/>
            <person name="Land M."/>
            <person name="Hauser L."/>
            <person name="Kyrpides N."/>
            <person name="Kim E."/>
            <person name="Belas R."/>
            <person name="Moran M.A."/>
            <person name="Buchan A."/>
            <person name="Gonzalez J.M."/>
            <person name="Schell M.A."/>
            <person name="Sun F."/>
            <person name="Richardson P."/>
        </authorList>
    </citation>
    <scope>NUCLEOTIDE SEQUENCE [LARGE SCALE GENOMIC DNA]</scope>
    <source>
        <strain>TM1040</strain>
    </source>
</reference>
<accession>Q1GIP0</accession>
<keyword id="KW-0997">Cell inner membrane</keyword>
<keyword id="KW-1003">Cell membrane</keyword>
<keyword id="KW-0472">Membrane</keyword>
<keyword id="KW-0520">NAD</keyword>
<keyword id="KW-0874">Quinone</keyword>
<keyword id="KW-1185">Reference proteome</keyword>
<keyword id="KW-1278">Translocase</keyword>
<keyword id="KW-0813">Transport</keyword>
<keyword id="KW-0830">Ubiquinone</keyword>
<proteinExistence type="inferred from homology"/>
<gene>
    <name evidence="1" type="primary">nuoC</name>
    <name type="ordered locus">TM1040_0743</name>
</gene>
<protein>
    <recommendedName>
        <fullName evidence="1">NADH-quinone oxidoreductase subunit C</fullName>
        <ecNumber evidence="1">7.1.1.-</ecNumber>
    </recommendedName>
    <alternativeName>
        <fullName evidence="1">NADH dehydrogenase I subunit C</fullName>
    </alternativeName>
    <alternativeName>
        <fullName evidence="1">NDH-1 subunit C</fullName>
    </alternativeName>
</protein>
<evidence type="ECO:0000255" key="1">
    <source>
        <dbReference type="HAMAP-Rule" id="MF_01357"/>
    </source>
</evidence>
<name>NUOC_RUEST</name>
<organism>
    <name type="scientific">Ruegeria sp. (strain TM1040)</name>
    <name type="common">Silicibacter sp.</name>
    <dbReference type="NCBI Taxonomy" id="292414"/>
    <lineage>
        <taxon>Bacteria</taxon>
        <taxon>Pseudomonadati</taxon>
        <taxon>Pseudomonadota</taxon>
        <taxon>Alphaproteobacteria</taxon>
        <taxon>Rhodobacterales</taxon>
        <taxon>Roseobacteraceae</taxon>
        <taxon>Ruegeria</taxon>
    </lineage>
</organism>
<feature type="chain" id="PRO_0000358198" description="NADH-quinone oxidoreductase subunit C">
    <location>
        <begin position="1"/>
        <end position="201"/>
    </location>
</feature>
<dbReference type="EC" id="7.1.1.-" evidence="1"/>
<dbReference type="EMBL" id="CP000377">
    <property type="protein sequence ID" value="ABF63476.1"/>
    <property type="molecule type" value="Genomic_DNA"/>
</dbReference>
<dbReference type="RefSeq" id="WP_011538088.1">
    <property type="nucleotide sequence ID" value="NC_008044.1"/>
</dbReference>
<dbReference type="SMR" id="Q1GIP0"/>
<dbReference type="STRING" id="292414.TM1040_0743"/>
<dbReference type="KEGG" id="sit:TM1040_0743"/>
<dbReference type="eggNOG" id="COG0852">
    <property type="taxonomic scope" value="Bacteria"/>
</dbReference>
<dbReference type="HOGENOM" id="CLU_042628_2_1_5"/>
<dbReference type="OrthoDB" id="9803286at2"/>
<dbReference type="Proteomes" id="UP000000636">
    <property type="component" value="Chromosome"/>
</dbReference>
<dbReference type="GO" id="GO:0005886">
    <property type="term" value="C:plasma membrane"/>
    <property type="evidence" value="ECO:0007669"/>
    <property type="project" value="UniProtKB-SubCell"/>
</dbReference>
<dbReference type="GO" id="GO:0008137">
    <property type="term" value="F:NADH dehydrogenase (ubiquinone) activity"/>
    <property type="evidence" value="ECO:0007669"/>
    <property type="project" value="InterPro"/>
</dbReference>
<dbReference type="GO" id="GO:0050136">
    <property type="term" value="F:NADH:ubiquinone reductase (non-electrogenic) activity"/>
    <property type="evidence" value="ECO:0007669"/>
    <property type="project" value="UniProtKB-UniRule"/>
</dbReference>
<dbReference type="GO" id="GO:0048038">
    <property type="term" value="F:quinone binding"/>
    <property type="evidence" value="ECO:0007669"/>
    <property type="project" value="UniProtKB-KW"/>
</dbReference>
<dbReference type="Gene3D" id="3.30.460.80">
    <property type="entry name" value="NADH:ubiquinone oxidoreductase, 30kDa subunit"/>
    <property type="match status" value="1"/>
</dbReference>
<dbReference type="HAMAP" id="MF_01357">
    <property type="entry name" value="NDH1_NuoC"/>
    <property type="match status" value="1"/>
</dbReference>
<dbReference type="InterPro" id="IPR010218">
    <property type="entry name" value="NADH_DH_suC"/>
</dbReference>
<dbReference type="InterPro" id="IPR037232">
    <property type="entry name" value="NADH_quin_OxRdtase_su_C/D-like"/>
</dbReference>
<dbReference type="InterPro" id="IPR001268">
    <property type="entry name" value="NADH_UbQ_OxRdtase_30kDa_su"/>
</dbReference>
<dbReference type="InterPro" id="IPR020396">
    <property type="entry name" value="NADH_UbQ_OxRdtase_CS"/>
</dbReference>
<dbReference type="NCBIfam" id="TIGR01961">
    <property type="entry name" value="NuoC_fam"/>
    <property type="match status" value="1"/>
</dbReference>
<dbReference type="NCBIfam" id="NF004733">
    <property type="entry name" value="PRK06074.1-5"/>
    <property type="match status" value="1"/>
</dbReference>
<dbReference type="PANTHER" id="PTHR10884:SF14">
    <property type="entry name" value="NADH DEHYDROGENASE [UBIQUINONE] IRON-SULFUR PROTEIN 3, MITOCHONDRIAL"/>
    <property type="match status" value="1"/>
</dbReference>
<dbReference type="PANTHER" id="PTHR10884">
    <property type="entry name" value="NADH DEHYDROGENASE UBIQUINONE IRON-SULFUR PROTEIN 3"/>
    <property type="match status" value="1"/>
</dbReference>
<dbReference type="Pfam" id="PF00329">
    <property type="entry name" value="Complex1_30kDa"/>
    <property type="match status" value="1"/>
</dbReference>
<dbReference type="SUPFAM" id="SSF143243">
    <property type="entry name" value="Nqo5-like"/>
    <property type="match status" value="1"/>
</dbReference>
<dbReference type="PROSITE" id="PS00542">
    <property type="entry name" value="COMPLEX1_30K"/>
    <property type="match status" value="1"/>
</dbReference>
<sequence length="201" mass="23483">MIEALQDLGHQIEAKRPECVLSWDIAHGELNIDVKPANIAGLVEFLRVDSACRFSTLVDITAVDYPERTKRFDVVYHLLSMYQNQRIRLRAAVREEDMVPSIVDVHPSANWFEREVFDMFGILFTGHPDLRRLLTDYGFRGHPLRKDFPTTGYTEVRYDEAQKRVVYEPVKLVQEYRQFDFMSPWEGAEYILPGDEKEIAK</sequence>
<comment type="function">
    <text evidence="1">NDH-1 shuttles electrons from NADH, via FMN and iron-sulfur (Fe-S) centers, to quinones in the respiratory chain. The immediate electron acceptor for the enzyme in this species is believed to be ubiquinone. Couples the redox reaction to proton translocation (for every two electrons transferred, four hydrogen ions are translocated across the cytoplasmic membrane), and thus conserves the redox energy in a proton gradient.</text>
</comment>
<comment type="catalytic activity">
    <reaction evidence="1">
        <text>a quinone + NADH + 5 H(+)(in) = a quinol + NAD(+) + 4 H(+)(out)</text>
        <dbReference type="Rhea" id="RHEA:57888"/>
        <dbReference type="ChEBI" id="CHEBI:15378"/>
        <dbReference type="ChEBI" id="CHEBI:24646"/>
        <dbReference type="ChEBI" id="CHEBI:57540"/>
        <dbReference type="ChEBI" id="CHEBI:57945"/>
        <dbReference type="ChEBI" id="CHEBI:132124"/>
    </reaction>
</comment>
<comment type="subunit">
    <text evidence="1">NDH-1 is composed of 14 different subunits. Subunits NuoB, C, D, E, F, and G constitute the peripheral sector of the complex.</text>
</comment>
<comment type="subcellular location">
    <subcellularLocation>
        <location evidence="1">Cell inner membrane</location>
        <topology evidence="1">Peripheral membrane protein</topology>
        <orientation evidence="1">Cytoplasmic side</orientation>
    </subcellularLocation>
</comment>
<comment type="similarity">
    <text evidence="1">Belongs to the complex I 30 kDa subunit family.</text>
</comment>